<comment type="function">
    <text evidence="1">This enzyme is involved in nucleotide metabolism: it produces dUMP, the immediate precursor of thymidine nucleotides and it decreases the intracellular concentration of dUTP so that uracil cannot be incorporated into DNA.</text>
</comment>
<comment type="catalytic activity">
    <reaction evidence="1">
        <text>dUTP + H2O = dUMP + diphosphate + H(+)</text>
        <dbReference type="Rhea" id="RHEA:10248"/>
        <dbReference type="ChEBI" id="CHEBI:15377"/>
        <dbReference type="ChEBI" id="CHEBI:15378"/>
        <dbReference type="ChEBI" id="CHEBI:33019"/>
        <dbReference type="ChEBI" id="CHEBI:61555"/>
        <dbReference type="ChEBI" id="CHEBI:246422"/>
        <dbReference type="EC" id="3.6.1.23"/>
    </reaction>
</comment>
<comment type="cofactor">
    <cofactor evidence="1">
        <name>Mg(2+)</name>
        <dbReference type="ChEBI" id="CHEBI:18420"/>
    </cofactor>
</comment>
<comment type="pathway">
    <text evidence="1">Pyrimidine metabolism; dUMP biosynthesis; dUMP from dCTP (dUTP route): step 2/2.</text>
</comment>
<comment type="similarity">
    <text evidence="1">Belongs to the dUTPase family.</text>
</comment>
<keyword id="KW-0378">Hydrolase</keyword>
<keyword id="KW-0460">Magnesium</keyword>
<keyword id="KW-0479">Metal-binding</keyword>
<keyword id="KW-0546">Nucleotide metabolism</keyword>
<proteinExistence type="inferred from homology"/>
<protein>
    <recommendedName>
        <fullName evidence="1">Deoxyuridine 5'-triphosphate nucleotidohydrolase</fullName>
        <shortName evidence="1">dUTPase</shortName>
        <ecNumber evidence="1">3.6.1.23</ecNumber>
    </recommendedName>
    <alternativeName>
        <fullName evidence="1">dUTP pyrophosphatase</fullName>
    </alternativeName>
</protein>
<gene>
    <name evidence="1" type="primary">dut</name>
    <name type="ordered locus">RPA0080</name>
</gene>
<feature type="chain" id="PRO_0000182901" description="Deoxyuridine 5'-triphosphate nucleotidohydrolase">
    <location>
        <begin position="1"/>
        <end position="152"/>
    </location>
</feature>
<feature type="binding site" evidence="1">
    <location>
        <begin position="72"/>
        <end position="74"/>
    </location>
    <ligand>
        <name>substrate</name>
    </ligand>
</feature>
<feature type="binding site" evidence="1">
    <location>
        <position position="85"/>
    </location>
    <ligand>
        <name>substrate</name>
    </ligand>
</feature>
<feature type="binding site" evidence="1">
    <location>
        <begin position="89"/>
        <end position="91"/>
    </location>
    <ligand>
        <name>substrate</name>
    </ligand>
</feature>
<dbReference type="EC" id="3.6.1.23" evidence="1"/>
<dbReference type="EMBL" id="BX572593">
    <property type="protein sequence ID" value="CAE25524.1"/>
    <property type="molecule type" value="Genomic_DNA"/>
</dbReference>
<dbReference type="RefSeq" id="WP_011155651.1">
    <property type="nucleotide sequence ID" value="NZ_CP116810.1"/>
</dbReference>
<dbReference type="SMR" id="P61911"/>
<dbReference type="STRING" id="258594.RPA0080"/>
<dbReference type="GeneID" id="66891081"/>
<dbReference type="eggNOG" id="COG0756">
    <property type="taxonomic scope" value="Bacteria"/>
</dbReference>
<dbReference type="HOGENOM" id="CLU_068508_1_2_5"/>
<dbReference type="PhylomeDB" id="P61911"/>
<dbReference type="UniPathway" id="UPA00610">
    <property type="reaction ID" value="UER00666"/>
</dbReference>
<dbReference type="GO" id="GO:0004170">
    <property type="term" value="F:dUTP diphosphatase activity"/>
    <property type="evidence" value="ECO:0007669"/>
    <property type="project" value="UniProtKB-UniRule"/>
</dbReference>
<dbReference type="GO" id="GO:0000287">
    <property type="term" value="F:magnesium ion binding"/>
    <property type="evidence" value="ECO:0007669"/>
    <property type="project" value="UniProtKB-UniRule"/>
</dbReference>
<dbReference type="GO" id="GO:0006226">
    <property type="term" value="P:dUMP biosynthetic process"/>
    <property type="evidence" value="ECO:0007669"/>
    <property type="project" value="UniProtKB-UniRule"/>
</dbReference>
<dbReference type="GO" id="GO:0046081">
    <property type="term" value="P:dUTP catabolic process"/>
    <property type="evidence" value="ECO:0007669"/>
    <property type="project" value="InterPro"/>
</dbReference>
<dbReference type="CDD" id="cd07557">
    <property type="entry name" value="trimeric_dUTPase"/>
    <property type="match status" value="1"/>
</dbReference>
<dbReference type="FunFam" id="2.70.40.10:FF:000002">
    <property type="entry name" value="dUTP diphosphatase"/>
    <property type="match status" value="1"/>
</dbReference>
<dbReference type="Gene3D" id="2.70.40.10">
    <property type="match status" value="1"/>
</dbReference>
<dbReference type="HAMAP" id="MF_00116">
    <property type="entry name" value="dUTPase_bact"/>
    <property type="match status" value="1"/>
</dbReference>
<dbReference type="InterPro" id="IPR008181">
    <property type="entry name" value="dUTPase"/>
</dbReference>
<dbReference type="InterPro" id="IPR029054">
    <property type="entry name" value="dUTPase-like"/>
</dbReference>
<dbReference type="InterPro" id="IPR036157">
    <property type="entry name" value="dUTPase-like_sf"/>
</dbReference>
<dbReference type="InterPro" id="IPR033704">
    <property type="entry name" value="dUTPase_trimeric"/>
</dbReference>
<dbReference type="NCBIfam" id="TIGR00576">
    <property type="entry name" value="dut"/>
    <property type="match status" value="1"/>
</dbReference>
<dbReference type="NCBIfam" id="NF001862">
    <property type="entry name" value="PRK00601.1"/>
    <property type="match status" value="1"/>
</dbReference>
<dbReference type="PANTHER" id="PTHR11241">
    <property type="entry name" value="DEOXYURIDINE 5'-TRIPHOSPHATE NUCLEOTIDOHYDROLASE"/>
    <property type="match status" value="1"/>
</dbReference>
<dbReference type="PANTHER" id="PTHR11241:SF0">
    <property type="entry name" value="DEOXYURIDINE 5'-TRIPHOSPHATE NUCLEOTIDOHYDROLASE"/>
    <property type="match status" value="1"/>
</dbReference>
<dbReference type="Pfam" id="PF00692">
    <property type="entry name" value="dUTPase"/>
    <property type="match status" value="1"/>
</dbReference>
<dbReference type="SUPFAM" id="SSF51283">
    <property type="entry name" value="dUTPase-like"/>
    <property type="match status" value="1"/>
</dbReference>
<name>DUT_RHOPA</name>
<organism>
    <name type="scientific">Rhodopseudomonas palustris (strain ATCC BAA-98 / CGA009)</name>
    <dbReference type="NCBI Taxonomy" id="258594"/>
    <lineage>
        <taxon>Bacteria</taxon>
        <taxon>Pseudomonadati</taxon>
        <taxon>Pseudomonadota</taxon>
        <taxon>Alphaproteobacteria</taxon>
        <taxon>Hyphomicrobiales</taxon>
        <taxon>Nitrobacteraceae</taxon>
        <taxon>Rhodopseudomonas</taxon>
    </lineage>
</organism>
<accession>P61911</accession>
<evidence type="ECO:0000255" key="1">
    <source>
        <dbReference type="HAMAP-Rule" id="MF_00116"/>
    </source>
</evidence>
<reference key="1">
    <citation type="journal article" date="2004" name="Nat. Biotechnol.">
        <title>Complete genome sequence of the metabolically versatile photosynthetic bacterium Rhodopseudomonas palustris.</title>
        <authorList>
            <person name="Larimer F.W."/>
            <person name="Chain P."/>
            <person name="Hauser L."/>
            <person name="Lamerdin J.E."/>
            <person name="Malfatti S."/>
            <person name="Do L."/>
            <person name="Land M.L."/>
            <person name="Pelletier D.A."/>
            <person name="Beatty J.T."/>
            <person name="Lang A.S."/>
            <person name="Tabita F.R."/>
            <person name="Gibson J.L."/>
            <person name="Hanson T.E."/>
            <person name="Bobst C."/>
            <person name="Torres y Torres J.L."/>
            <person name="Peres C."/>
            <person name="Harrison F.H."/>
            <person name="Gibson J."/>
            <person name="Harwood C.S."/>
        </authorList>
    </citation>
    <scope>NUCLEOTIDE SEQUENCE [LARGE SCALE GENOMIC DNA]</scope>
    <source>
        <strain>ATCC BAA-98 / CGA009</strain>
    </source>
</reference>
<sequence length="152" mass="16001">MTQKITVSIRHLPHGEGLPLPEYQTAHAAGLDLIAAVPQDAPLTLQPGRYVLVPTGLTIALPENYEAQVRPRSGLAAKHGVTVLNAPGTIDADYRGEIGVLLINHGTEPFAIRRGERIAQMVIAPVSRAQFVAVEALPESGRGAGGFGSTGR</sequence>